<reference key="1">
    <citation type="journal article" date="1985" name="Cell">
        <title>Characterization of the hamster desmin gene: expression and formation of desmin filaments in nonmuscle cells after gene transfer.</title>
        <authorList>
            <person name="Quax W.J."/>
            <person name="van den Broek L."/>
            <person name="Egberts W.V."/>
            <person name="Ramaekers F."/>
            <person name="Bloemendal H."/>
        </authorList>
    </citation>
    <scope>NUCLEOTIDE SEQUENCE [GENOMIC DNA]</scope>
</reference>
<reference key="2">
    <citation type="journal article" date="1984" name="Proc. Natl. Acad. Sci. U.S.A.">
        <title>Intermediate filament cDNAs from BHK-21 cells: demonstration of distinct genes for desmin and vimentin in all vertebrate classes.</title>
        <authorList>
            <person name="Quax W.J."/>
            <person name="van den Heuvel R."/>
            <person name="Egberts W.V."/>
            <person name="Quax-Jeuken Y.E.F.M."/>
            <person name="Bloemendal H."/>
        </authorList>
    </citation>
    <scope>NUCLEOTIDE SEQUENCE [MRNA] OF 172-469</scope>
</reference>
<keyword id="KW-0013">ADP-ribosylation</keyword>
<keyword id="KW-1003">Cell membrane</keyword>
<keyword id="KW-0175">Coiled coil</keyword>
<keyword id="KW-0963">Cytoplasm</keyword>
<keyword id="KW-0403">Intermediate filament</keyword>
<keyword id="KW-0472">Membrane</keyword>
<keyword id="KW-0488">Methylation</keyword>
<keyword id="KW-0514">Muscle protein</keyword>
<keyword id="KW-0539">Nucleus</keyword>
<keyword id="KW-0597">Phosphoprotein</keyword>
<keyword id="KW-1185">Reference proteome</keyword>
<keyword id="KW-0832">Ubl conjugation</keyword>
<proteinExistence type="evidence at transcript level"/>
<evidence type="ECO:0000250" key="1">
    <source>
        <dbReference type="UniProtKB" id="P02542"/>
    </source>
</evidence>
<evidence type="ECO:0000250" key="2">
    <source>
        <dbReference type="UniProtKB" id="P17661"/>
    </source>
</evidence>
<evidence type="ECO:0000250" key="3">
    <source>
        <dbReference type="UniProtKB" id="P31001"/>
    </source>
</evidence>
<evidence type="ECO:0000250" key="4">
    <source>
        <dbReference type="UniProtKB" id="P48675"/>
    </source>
</evidence>
<evidence type="ECO:0000255" key="5">
    <source>
        <dbReference type="PROSITE-ProRule" id="PRU01188"/>
    </source>
</evidence>
<name>DESM_MESAU</name>
<protein>
    <recommendedName>
        <fullName>Desmin</fullName>
    </recommendedName>
</protein>
<comment type="function">
    <text evidence="2 3">Muscle-specific type III intermediate filament essential for proper muscular structure and function. Plays a crucial role in maintaining the structure of sarcomeres, inter-connecting the Z-disks and forming the myofibrils, linking them not only to the sarcolemmal cytoskeleton, but also to the nucleus and mitochondria, thus providing strength for the muscle fiber during activity. In adult striated muscle they form a fibrous network connecting myofibrils to each other and to the plasma membrane from the periphery of the Z-line structures. May act as a sarcomeric microtubule-anchoring protein: specifically associates with detyrosinated tubulin-alpha chains, leading to buckled microtubules and mechanical resistance to contraction. Required for nuclear membrane integrity, via anchoring at the cell tip and nuclear envelope, resulting in maintenance of microtubule-derived intracellular mechanical forces (By similarity). Contributes to the transcriptional regulation of the NKX2-5 gene in cardiac progenitor cells during a short period of cardiomyogenesis and in cardiac side population stem cells in the adult. Plays a role in maintaining an optimal conformation of nebulette (NEB) on heart muscle sarcomeres to bind and recruit cardiac alpha-actin.</text>
</comment>
<comment type="subunit">
    <text evidence="2 3">Homomer. Interacts with DST. Interacts with MTM1. Interacts with EPPK1; interaction is dependent of higher-order structure of intermediate filament. Interacts with CRYAB. Interacts with NEB (via nebulin repeats 160-164). Interacts (via rod region) with NEBL (via nebulin repeats 1-5). Interacts with ASB2; the interaction targets DES for proteasomal degradation (By similarity). Interacts with PKP1 (By similarity). Interacts with FLII (By similarity).</text>
</comment>
<comment type="subcellular location">
    <subcellularLocation>
        <location evidence="2">Cytoplasm</location>
        <location evidence="2">Myofibril</location>
        <location evidence="2">Sarcomere</location>
        <location evidence="2">Z line</location>
    </subcellularLocation>
    <subcellularLocation>
        <location evidence="2">Cytoplasm</location>
    </subcellularLocation>
    <subcellularLocation>
        <location evidence="2">Cell membrane</location>
        <location evidence="2">Sarcolemma</location>
    </subcellularLocation>
    <subcellularLocation>
        <location evidence="3">Nucleus</location>
    </subcellularLocation>
    <subcellularLocation>
        <location evidence="3">Cell tip</location>
    </subcellularLocation>
    <subcellularLocation>
        <location evidence="3">Nucleus envelope</location>
    </subcellularLocation>
    <text evidence="2 3">Localizes in the intercalated disks which occur at the Z line of cardiomyocytes. Localizes in the nucleus exclusively in differentiating cardiac progenitor cells and premature cardiomyocytes. PKP2 is required for correct anchoring of DES at the cell tip and nuclear envelope (By similarity).</text>
</comment>
<comment type="PTM">
    <text evidence="4">ADP-ribosylation prevents ability to form intermediate filaments.</text>
</comment>
<comment type="PTM">
    <text evidence="3">Phosphorylation at Ser-7, Ser-28 and Ser-32 by CDK1 and phosphorylation at Ser-60 by AURKB contribute to efficient separation of desmin intermediate filaments during mitosis.</text>
</comment>
<comment type="PTM">
    <text evidence="3">Ubiquitination by a SCF-like complex containing ASB2 leads to proteasomal degradation.</text>
</comment>
<comment type="similarity">
    <text evidence="5">Belongs to the intermediate filament family.</text>
</comment>
<dbReference type="EMBL" id="K02407">
    <property type="protein sequence ID" value="AAA37071.1"/>
    <property type="molecule type" value="mRNA"/>
</dbReference>
<dbReference type="EMBL" id="M12104">
    <property type="protein sequence ID" value="AAA37072.1"/>
    <property type="molecule type" value="Genomic_DNA"/>
</dbReference>
<dbReference type="EMBL" id="M12102">
    <property type="protein sequence ID" value="AAA37072.1"/>
    <property type="status" value="JOINED"/>
    <property type="molecule type" value="Genomic_DNA"/>
</dbReference>
<dbReference type="EMBL" id="M12103">
    <property type="protein sequence ID" value="AAA37072.1"/>
    <property type="status" value="JOINED"/>
    <property type="molecule type" value="Genomic_DNA"/>
</dbReference>
<dbReference type="PIR" id="A02956">
    <property type="entry name" value="DMHY"/>
</dbReference>
<dbReference type="PIR" id="A24783">
    <property type="entry name" value="A24783"/>
</dbReference>
<dbReference type="RefSeq" id="NP_001268541.1">
    <property type="nucleotide sequence ID" value="NM_001281612.1"/>
</dbReference>
<dbReference type="SMR" id="P02541"/>
<dbReference type="STRING" id="10036.ENSMAUP00000012774"/>
<dbReference type="Ensembl" id="ENSMAUT00000016682">
    <property type="protein sequence ID" value="ENSMAUP00000012774"/>
    <property type="gene ID" value="ENSMAUG00000012989"/>
</dbReference>
<dbReference type="GeneID" id="101837949"/>
<dbReference type="KEGG" id="maua:101837949"/>
<dbReference type="CTD" id="1674"/>
<dbReference type="eggNOG" id="KOG0977">
    <property type="taxonomic scope" value="Eukaryota"/>
</dbReference>
<dbReference type="OrthoDB" id="2441647at2759"/>
<dbReference type="Proteomes" id="UP000189706">
    <property type="component" value="Unplaced"/>
</dbReference>
<dbReference type="GO" id="GO:0097512">
    <property type="term" value="C:cardiac myofibril"/>
    <property type="evidence" value="ECO:0007669"/>
    <property type="project" value="Ensembl"/>
</dbReference>
<dbReference type="GO" id="GO:0051286">
    <property type="term" value="C:cell tip"/>
    <property type="evidence" value="ECO:0000250"/>
    <property type="project" value="UniProtKB"/>
</dbReference>
<dbReference type="GO" id="GO:0005737">
    <property type="term" value="C:cytoplasm"/>
    <property type="evidence" value="ECO:0000250"/>
    <property type="project" value="UniProtKB"/>
</dbReference>
<dbReference type="GO" id="GO:0005916">
    <property type="term" value="C:fascia adherens"/>
    <property type="evidence" value="ECO:0007669"/>
    <property type="project" value="Ensembl"/>
</dbReference>
<dbReference type="GO" id="GO:0014704">
    <property type="term" value="C:intercalated disc"/>
    <property type="evidence" value="ECO:0000250"/>
    <property type="project" value="UniProtKB"/>
</dbReference>
<dbReference type="GO" id="GO:0005882">
    <property type="term" value="C:intermediate filament"/>
    <property type="evidence" value="ECO:0007669"/>
    <property type="project" value="UniProtKB-KW"/>
</dbReference>
<dbReference type="GO" id="GO:0031594">
    <property type="term" value="C:neuromuscular junction"/>
    <property type="evidence" value="ECO:0007669"/>
    <property type="project" value="Ensembl"/>
</dbReference>
<dbReference type="GO" id="GO:0005635">
    <property type="term" value="C:nuclear envelope"/>
    <property type="evidence" value="ECO:0000250"/>
    <property type="project" value="UniProtKB"/>
</dbReference>
<dbReference type="GO" id="GO:0005634">
    <property type="term" value="C:nucleus"/>
    <property type="evidence" value="ECO:0000250"/>
    <property type="project" value="UniProtKB"/>
</dbReference>
<dbReference type="GO" id="GO:0042383">
    <property type="term" value="C:sarcolemma"/>
    <property type="evidence" value="ECO:0000250"/>
    <property type="project" value="UniProtKB"/>
</dbReference>
<dbReference type="GO" id="GO:0030018">
    <property type="term" value="C:Z disc"/>
    <property type="evidence" value="ECO:0000250"/>
    <property type="project" value="UniProtKB"/>
</dbReference>
<dbReference type="GO" id="GO:0008092">
    <property type="term" value="F:cytoskeletal protein binding"/>
    <property type="evidence" value="ECO:0007669"/>
    <property type="project" value="Ensembl"/>
</dbReference>
<dbReference type="GO" id="GO:0042802">
    <property type="term" value="F:identical protein binding"/>
    <property type="evidence" value="ECO:0007669"/>
    <property type="project" value="Ensembl"/>
</dbReference>
<dbReference type="GO" id="GO:0005200">
    <property type="term" value="F:structural constituent of cytoskeleton"/>
    <property type="evidence" value="ECO:0007669"/>
    <property type="project" value="TreeGrafter"/>
</dbReference>
<dbReference type="GO" id="GO:0045109">
    <property type="term" value="P:intermediate filament organization"/>
    <property type="evidence" value="ECO:0000250"/>
    <property type="project" value="UniProtKB"/>
</dbReference>
<dbReference type="GO" id="GO:0006998">
    <property type="term" value="P:nuclear envelope organization"/>
    <property type="evidence" value="ECO:0000250"/>
    <property type="project" value="UniProtKB"/>
</dbReference>
<dbReference type="GO" id="GO:0060538">
    <property type="term" value="P:skeletal muscle organ development"/>
    <property type="evidence" value="ECO:0007669"/>
    <property type="project" value="TreeGrafter"/>
</dbReference>
<dbReference type="FunFam" id="1.20.5.1160:FF:000001">
    <property type="entry name" value="Keratin type II"/>
    <property type="match status" value="1"/>
</dbReference>
<dbReference type="FunFam" id="1.20.5.170:FF:000002">
    <property type="entry name" value="Type I keratin KA11"/>
    <property type="match status" value="1"/>
</dbReference>
<dbReference type="FunFam" id="1.20.5.500:FF:000001">
    <property type="entry name" value="Type II keratin 23"/>
    <property type="match status" value="1"/>
</dbReference>
<dbReference type="Gene3D" id="1.20.5.170">
    <property type="match status" value="1"/>
</dbReference>
<dbReference type="Gene3D" id="1.20.5.500">
    <property type="entry name" value="Single helix bin"/>
    <property type="match status" value="1"/>
</dbReference>
<dbReference type="Gene3D" id="1.20.5.1160">
    <property type="entry name" value="Vasodilator-stimulated phosphoprotein"/>
    <property type="match status" value="1"/>
</dbReference>
<dbReference type="InterPro" id="IPR018039">
    <property type="entry name" value="IF_conserved"/>
</dbReference>
<dbReference type="InterPro" id="IPR039008">
    <property type="entry name" value="IF_rod_dom"/>
</dbReference>
<dbReference type="InterPro" id="IPR006821">
    <property type="entry name" value="Intermed_filament_DNA-bd"/>
</dbReference>
<dbReference type="InterPro" id="IPR050405">
    <property type="entry name" value="Intermediate_filament"/>
</dbReference>
<dbReference type="PANTHER" id="PTHR45652:SF2">
    <property type="entry name" value="DESMIN"/>
    <property type="match status" value="1"/>
</dbReference>
<dbReference type="PANTHER" id="PTHR45652">
    <property type="entry name" value="GLIAL FIBRILLARY ACIDIC PROTEIN"/>
    <property type="match status" value="1"/>
</dbReference>
<dbReference type="Pfam" id="PF00038">
    <property type="entry name" value="Filament"/>
    <property type="match status" value="1"/>
</dbReference>
<dbReference type="Pfam" id="PF04732">
    <property type="entry name" value="Filament_head"/>
    <property type="match status" value="1"/>
</dbReference>
<dbReference type="SMART" id="SM01391">
    <property type="entry name" value="Filament"/>
    <property type="match status" value="1"/>
</dbReference>
<dbReference type="SUPFAM" id="SSF64593">
    <property type="entry name" value="Intermediate filament protein, coiled coil region"/>
    <property type="match status" value="2"/>
</dbReference>
<dbReference type="PROSITE" id="PS00226">
    <property type="entry name" value="IF_ROD_1"/>
    <property type="match status" value="1"/>
</dbReference>
<dbReference type="PROSITE" id="PS51842">
    <property type="entry name" value="IF_ROD_2"/>
    <property type="match status" value="1"/>
</dbReference>
<feature type="initiator methionine" description="Removed" evidence="1">
    <location>
        <position position="1"/>
    </location>
</feature>
<feature type="chain" id="PRO_0000063772" description="Desmin">
    <location>
        <begin position="2"/>
        <end position="469"/>
    </location>
</feature>
<feature type="domain" description="IF rod" evidence="5">
    <location>
        <begin position="107"/>
        <end position="415"/>
    </location>
</feature>
<feature type="region of interest" description="Head">
    <location>
        <begin position="2"/>
        <end position="107"/>
    </location>
</feature>
<feature type="region of interest" description="Coil 1A">
    <location>
        <begin position="108"/>
        <end position="140"/>
    </location>
</feature>
<feature type="region of interest" description="Linker 1">
    <location>
        <begin position="141"/>
        <end position="150"/>
    </location>
</feature>
<feature type="region of interest" description="Coil 1B">
    <location>
        <begin position="151"/>
        <end position="251"/>
    </location>
</feature>
<feature type="region of interest" description="Linker 12">
    <location>
        <begin position="252"/>
        <end position="267"/>
    </location>
</feature>
<feature type="region of interest" description="Interaction with NEB" evidence="2">
    <location>
        <begin position="267"/>
        <end position="414"/>
    </location>
</feature>
<feature type="region of interest" description="Coil 2A">
    <location>
        <begin position="268"/>
        <end position="286"/>
    </location>
</feature>
<feature type="region of interest" description="Linker 2">
    <location>
        <begin position="287"/>
        <end position="294"/>
    </location>
</feature>
<feature type="region of interest" description="Coil 2B">
    <location>
        <begin position="295"/>
        <end position="411"/>
    </location>
</feature>
<feature type="region of interest" description="Tail">
    <location>
        <begin position="412"/>
        <end position="469"/>
    </location>
</feature>
<feature type="region of interest" description="Interaction with CRYAB" evidence="2">
    <location>
        <begin position="437"/>
        <end position="452"/>
    </location>
</feature>
<feature type="site" description="Stutter">
    <location>
        <position position="353"/>
    </location>
</feature>
<feature type="modified residue" description="Phosphoserine; by CDK1" evidence="3">
    <location>
        <position position="7"/>
    </location>
</feature>
<feature type="modified residue" description="Phosphoserine; by AURKB" evidence="2">
    <location>
        <position position="12"/>
    </location>
</feature>
<feature type="modified residue" description="Omega-N-methylarginine" evidence="3">
    <location>
        <position position="16"/>
    </location>
</feature>
<feature type="modified residue" description="Phosphothreonine; by AURKB and ROCK1" evidence="2">
    <location>
        <position position="17"/>
    </location>
</feature>
<feature type="modified residue" description="Phosphoserine" evidence="3">
    <location>
        <position position="25"/>
    </location>
</feature>
<feature type="modified residue" description="Phosphoserine; by CDK1" evidence="2">
    <location>
        <position position="28"/>
    </location>
</feature>
<feature type="modified residue" description="Phosphoserine" evidence="3">
    <location>
        <position position="31"/>
    </location>
</feature>
<feature type="modified residue" description="Phosphoserine; by CDK1" evidence="2">
    <location>
        <position position="32"/>
    </location>
</feature>
<feature type="modified residue" description="Asymmetric dimethylarginine; alternate" evidence="3">
    <location>
        <position position="37"/>
    </location>
</feature>
<feature type="modified residue" description="Omega-N-methylarginine; alternate" evidence="3">
    <location>
        <position position="37"/>
    </location>
</feature>
<feature type="modified residue" description="Phosphoserine" evidence="4">
    <location>
        <position position="45"/>
    </location>
</feature>
<feature type="modified residue" description="ADP-ribosylarginine" evidence="4">
    <location>
        <position position="58"/>
    </location>
</feature>
<feature type="modified residue" description="Phosphoserine; by AURKB" evidence="2">
    <location>
        <position position="60"/>
    </location>
</feature>
<feature type="modified residue" description="Phosphoserine" evidence="3">
    <location>
        <position position="68"/>
    </location>
</feature>
<feature type="modified residue" description="Omega-N-methylarginine" evidence="3">
    <location>
        <position position="70"/>
    </location>
</feature>
<feature type="modified residue" description="Phosphothreonine; by ROCK1" evidence="2">
    <location>
        <position position="77"/>
    </location>
</feature>
<feature type="modified residue" description="Phosphoserine" evidence="4">
    <location>
        <position position="81"/>
    </location>
</feature>
<feature type="modified residue" description="Phosphoserine" evidence="4">
    <location>
        <position position="289"/>
    </location>
</feature>
<feature type="modified residue" description="Phosphoserine" evidence="4">
    <location>
        <position position="357"/>
    </location>
</feature>
<feature type="modified residue" description="Phosphoserine" evidence="4">
    <location>
        <position position="360"/>
    </location>
</feature>
<feature type="modified residue" description="Phosphoserine" evidence="3">
    <location>
        <position position="423"/>
    </location>
</feature>
<organism>
    <name type="scientific">Mesocricetus auratus</name>
    <name type="common">Golden hamster</name>
    <dbReference type="NCBI Taxonomy" id="10036"/>
    <lineage>
        <taxon>Eukaryota</taxon>
        <taxon>Metazoa</taxon>
        <taxon>Chordata</taxon>
        <taxon>Craniata</taxon>
        <taxon>Vertebrata</taxon>
        <taxon>Euteleostomi</taxon>
        <taxon>Mammalia</taxon>
        <taxon>Eutheria</taxon>
        <taxon>Euarchontoglires</taxon>
        <taxon>Glires</taxon>
        <taxon>Rodentia</taxon>
        <taxon>Myomorpha</taxon>
        <taxon>Muroidea</taxon>
        <taxon>Cricetidae</taxon>
        <taxon>Cricetinae</taxon>
        <taxon>Mesocricetus</taxon>
    </lineage>
</organism>
<gene>
    <name type="primary">DES</name>
</gene>
<accession>P02541</accession>
<sequence>MSQAYSSSQRVSSYRRTFGGAPSFSLGSPLSSPVFPRAGFGTKGSSSSVTSRVYQVSRTSGGAGGLGSLRASRLGSTRAPSYGAGELLDFSLADAVNQEFLATRTNEKVELQELNDRFANYIEKVRFLEQQNAALAAEVNRLKGREPTRVAELYEEEMRELRRQVEVLTNQRARVDVERDNLIDDLQRLKAKLQEEIQLREEAENNLAAFRADVDAATLARIDLERRIESLNEEIAFLKKVHEEEIRELQAQLQEQQVQVEMDMSKPDLTAALRDIRAQYETIAAKNISEAEEWYKSKVSDLTQAANKNNDALRQAKQEMMEYRHQIQSYTCEIDALKGTNDSLMRQMRELEDRFASEASGYQDNIARLEEEIRHLKDEMARHLREYQDLLNVKMALDVEIATYRKLLEGEESRINLPIQTFSALNFRETSPEQRGSEVHTKKTVMIKTIETRDGEVVSEATQQQHEVL</sequence>